<comment type="function">
    <text evidence="1">Catalyzes the formation of S-adenosylmethionine (AdoMet) from methionine and ATP. The overall synthetic reaction is composed of two sequential steps, AdoMet formation and the subsequent tripolyphosphate hydrolysis which occurs prior to release of AdoMet from the enzyme.</text>
</comment>
<comment type="catalytic activity">
    <reaction evidence="1">
        <text>L-methionine + ATP + H2O = S-adenosyl-L-methionine + phosphate + diphosphate</text>
        <dbReference type="Rhea" id="RHEA:21080"/>
        <dbReference type="ChEBI" id="CHEBI:15377"/>
        <dbReference type="ChEBI" id="CHEBI:30616"/>
        <dbReference type="ChEBI" id="CHEBI:33019"/>
        <dbReference type="ChEBI" id="CHEBI:43474"/>
        <dbReference type="ChEBI" id="CHEBI:57844"/>
        <dbReference type="ChEBI" id="CHEBI:59789"/>
        <dbReference type="EC" id="2.5.1.6"/>
    </reaction>
</comment>
<comment type="cofactor">
    <cofactor evidence="1">
        <name>Mg(2+)</name>
        <dbReference type="ChEBI" id="CHEBI:18420"/>
    </cofactor>
    <text evidence="1">Binds 2 divalent ions per subunit.</text>
</comment>
<comment type="cofactor">
    <cofactor evidence="1">
        <name>K(+)</name>
        <dbReference type="ChEBI" id="CHEBI:29103"/>
    </cofactor>
    <text evidence="1">Binds 1 potassium ion per subunit.</text>
</comment>
<comment type="pathway">
    <text evidence="1">Amino-acid biosynthesis; S-adenosyl-L-methionine biosynthesis; S-adenosyl-L-methionine from L-methionine: step 1/1.</text>
</comment>
<comment type="subunit">
    <text evidence="1">Homotetramer; dimer of dimers.</text>
</comment>
<comment type="subcellular location">
    <subcellularLocation>
        <location evidence="1">Cytoplasm</location>
    </subcellularLocation>
</comment>
<comment type="similarity">
    <text evidence="1">Belongs to the AdoMet synthase family.</text>
</comment>
<reference key="1">
    <citation type="submission" date="2006-01" db="EMBL/GenBank/DDBJ databases">
        <title>Complete sequence of Rhodopseudomonas palustris HaA2.</title>
        <authorList>
            <consortium name="US DOE Joint Genome Institute"/>
            <person name="Copeland A."/>
            <person name="Lucas S."/>
            <person name="Lapidus A."/>
            <person name="Barry K."/>
            <person name="Detter J.C."/>
            <person name="Glavina T."/>
            <person name="Hammon N."/>
            <person name="Israni S."/>
            <person name="Pitluck S."/>
            <person name="Chain P."/>
            <person name="Malfatti S."/>
            <person name="Shin M."/>
            <person name="Vergez L."/>
            <person name="Schmutz J."/>
            <person name="Larimer F."/>
            <person name="Land M."/>
            <person name="Hauser L."/>
            <person name="Pelletier D.A."/>
            <person name="Kyrpides N."/>
            <person name="Anderson I."/>
            <person name="Oda Y."/>
            <person name="Harwood C.S."/>
            <person name="Richardson P."/>
        </authorList>
    </citation>
    <scope>NUCLEOTIDE SEQUENCE [LARGE SCALE GENOMIC DNA]</scope>
    <source>
        <strain>HaA2</strain>
    </source>
</reference>
<keyword id="KW-0067">ATP-binding</keyword>
<keyword id="KW-0963">Cytoplasm</keyword>
<keyword id="KW-0460">Magnesium</keyword>
<keyword id="KW-0479">Metal-binding</keyword>
<keyword id="KW-0547">Nucleotide-binding</keyword>
<keyword id="KW-0554">One-carbon metabolism</keyword>
<keyword id="KW-0630">Potassium</keyword>
<keyword id="KW-1185">Reference proteome</keyword>
<keyword id="KW-0808">Transferase</keyword>
<gene>
    <name evidence="1" type="primary">metK</name>
    <name type="ordered locus">RPB_1588</name>
</gene>
<dbReference type="EC" id="2.5.1.6" evidence="1"/>
<dbReference type="EMBL" id="CP000250">
    <property type="protein sequence ID" value="ABD06298.1"/>
    <property type="molecule type" value="Genomic_DNA"/>
</dbReference>
<dbReference type="RefSeq" id="WP_011440486.1">
    <property type="nucleotide sequence ID" value="NC_007778.1"/>
</dbReference>
<dbReference type="SMR" id="Q2IZR2"/>
<dbReference type="STRING" id="316058.RPB_1588"/>
<dbReference type="KEGG" id="rpb:RPB_1588"/>
<dbReference type="eggNOG" id="COG0192">
    <property type="taxonomic scope" value="Bacteria"/>
</dbReference>
<dbReference type="HOGENOM" id="CLU_041802_1_1_5"/>
<dbReference type="OrthoDB" id="9801686at2"/>
<dbReference type="UniPathway" id="UPA00315">
    <property type="reaction ID" value="UER00080"/>
</dbReference>
<dbReference type="Proteomes" id="UP000008809">
    <property type="component" value="Chromosome"/>
</dbReference>
<dbReference type="GO" id="GO:0005737">
    <property type="term" value="C:cytoplasm"/>
    <property type="evidence" value="ECO:0007669"/>
    <property type="project" value="UniProtKB-SubCell"/>
</dbReference>
<dbReference type="GO" id="GO:0005524">
    <property type="term" value="F:ATP binding"/>
    <property type="evidence" value="ECO:0007669"/>
    <property type="project" value="UniProtKB-UniRule"/>
</dbReference>
<dbReference type="GO" id="GO:0000287">
    <property type="term" value="F:magnesium ion binding"/>
    <property type="evidence" value="ECO:0007669"/>
    <property type="project" value="UniProtKB-UniRule"/>
</dbReference>
<dbReference type="GO" id="GO:0004478">
    <property type="term" value="F:methionine adenosyltransferase activity"/>
    <property type="evidence" value="ECO:0007669"/>
    <property type="project" value="UniProtKB-UniRule"/>
</dbReference>
<dbReference type="GO" id="GO:0006730">
    <property type="term" value="P:one-carbon metabolic process"/>
    <property type="evidence" value="ECO:0007669"/>
    <property type="project" value="UniProtKB-KW"/>
</dbReference>
<dbReference type="GO" id="GO:0006556">
    <property type="term" value="P:S-adenosylmethionine biosynthetic process"/>
    <property type="evidence" value="ECO:0007669"/>
    <property type="project" value="UniProtKB-UniRule"/>
</dbReference>
<dbReference type="CDD" id="cd18079">
    <property type="entry name" value="S-AdoMet_synt"/>
    <property type="match status" value="1"/>
</dbReference>
<dbReference type="FunFam" id="3.30.300.10:FF:000003">
    <property type="entry name" value="S-adenosylmethionine synthase"/>
    <property type="match status" value="1"/>
</dbReference>
<dbReference type="Gene3D" id="3.30.300.10">
    <property type="match status" value="3"/>
</dbReference>
<dbReference type="HAMAP" id="MF_00086">
    <property type="entry name" value="S_AdoMet_synth1"/>
    <property type="match status" value="1"/>
</dbReference>
<dbReference type="InterPro" id="IPR022631">
    <property type="entry name" value="ADOMET_SYNTHASE_CS"/>
</dbReference>
<dbReference type="InterPro" id="IPR022630">
    <property type="entry name" value="S-AdoMet_synt_C"/>
</dbReference>
<dbReference type="InterPro" id="IPR022629">
    <property type="entry name" value="S-AdoMet_synt_central"/>
</dbReference>
<dbReference type="InterPro" id="IPR022628">
    <property type="entry name" value="S-AdoMet_synt_N"/>
</dbReference>
<dbReference type="InterPro" id="IPR002133">
    <property type="entry name" value="S-AdoMet_synthetase"/>
</dbReference>
<dbReference type="InterPro" id="IPR022636">
    <property type="entry name" value="S-AdoMet_synthetase_sfam"/>
</dbReference>
<dbReference type="NCBIfam" id="TIGR01034">
    <property type="entry name" value="metK"/>
    <property type="match status" value="1"/>
</dbReference>
<dbReference type="PANTHER" id="PTHR11964">
    <property type="entry name" value="S-ADENOSYLMETHIONINE SYNTHETASE"/>
    <property type="match status" value="1"/>
</dbReference>
<dbReference type="Pfam" id="PF02773">
    <property type="entry name" value="S-AdoMet_synt_C"/>
    <property type="match status" value="1"/>
</dbReference>
<dbReference type="Pfam" id="PF02772">
    <property type="entry name" value="S-AdoMet_synt_M"/>
    <property type="match status" value="1"/>
</dbReference>
<dbReference type="Pfam" id="PF00438">
    <property type="entry name" value="S-AdoMet_synt_N"/>
    <property type="match status" value="1"/>
</dbReference>
<dbReference type="PIRSF" id="PIRSF000497">
    <property type="entry name" value="MAT"/>
    <property type="match status" value="1"/>
</dbReference>
<dbReference type="SUPFAM" id="SSF55973">
    <property type="entry name" value="S-adenosylmethionine synthetase"/>
    <property type="match status" value="3"/>
</dbReference>
<dbReference type="PROSITE" id="PS00376">
    <property type="entry name" value="ADOMET_SYNTHASE_1"/>
    <property type="match status" value="1"/>
</dbReference>
<dbReference type="PROSITE" id="PS00377">
    <property type="entry name" value="ADOMET_SYNTHASE_2"/>
    <property type="match status" value="1"/>
</dbReference>
<evidence type="ECO:0000255" key="1">
    <source>
        <dbReference type="HAMAP-Rule" id="MF_00086"/>
    </source>
</evidence>
<name>METK_RHOP2</name>
<sequence length="398" mass="43207">MRASYLFTSESVSEGHPDKVCDRISDEVVDLFFREGPKAGIDPWAIRAACETLATTNKVVIAGETRGPASVTNDQIESVVRAAIKDIGYEQEGFHWDTCDIEILLHPQSADIAQGVDALQPGTNKEEGAGDQGIMFGYATNETPDLMPAPIFYAHKILRLISEARHSGKEKVLGPDSKSQVTIQYENGKPVGVREIVVSHQHLVEDMTSNQVRERVEPYVRQALPDGWITDKTIWHINPTGKFYIGGPDGDTGLTGRKIIVDTYGGAAPHGGGAFSGKDPTKVDRSAAYASRYLAKNIVAAGLADRCTLQLAYAIGVARPLSIYIDTHGTGKVSEDKLEKAVAEAMDLTPRGIRSHLDLNKPIYARTSSYGHFGRTPDADGGFSWEKTDLADALKRAV</sequence>
<feature type="chain" id="PRO_0000241029" description="S-adenosylmethionine synthase">
    <location>
        <begin position="1"/>
        <end position="398"/>
    </location>
</feature>
<feature type="region of interest" description="Flexible loop" evidence="1">
    <location>
        <begin position="108"/>
        <end position="118"/>
    </location>
</feature>
<feature type="binding site" description="in other chain" evidence="1">
    <location>
        <position position="16"/>
    </location>
    <ligand>
        <name>ATP</name>
        <dbReference type="ChEBI" id="CHEBI:30616"/>
        <note>ligand shared between two neighboring subunits</note>
    </ligand>
</feature>
<feature type="binding site" evidence="1">
    <location>
        <position position="18"/>
    </location>
    <ligand>
        <name>Mg(2+)</name>
        <dbReference type="ChEBI" id="CHEBI:18420"/>
    </ligand>
</feature>
<feature type="binding site" evidence="1">
    <location>
        <position position="51"/>
    </location>
    <ligand>
        <name>K(+)</name>
        <dbReference type="ChEBI" id="CHEBI:29103"/>
    </ligand>
</feature>
<feature type="binding site" description="in other chain" evidence="1">
    <location>
        <position position="64"/>
    </location>
    <ligand>
        <name>L-methionine</name>
        <dbReference type="ChEBI" id="CHEBI:57844"/>
        <note>ligand shared between two neighboring subunits</note>
    </ligand>
</feature>
<feature type="binding site" description="in other chain" evidence="1">
    <location>
        <position position="108"/>
    </location>
    <ligand>
        <name>L-methionine</name>
        <dbReference type="ChEBI" id="CHEBI:57844"/>
        <note>ligand shared between two neighboring subunits</note>
    </ligand>
</feature>
<feature type="binding site" description="in other chain" evidence="1">
    <location>
        <begin position="176"/>
        <end position="178"/>
    </location>
    <ligand>
        <name>ATP</name>
        <dbReference type="ChEBI" id="CHEBI:30616"/>
        <note>ligand shared between two neighboring subunits</note>
    </ligand>
</feature>
<feature type="binding site" description="in other chain" evidence="1">
    <location>
        <begin position="242"/>
        <end position="243"/>
    </location>
    <ligand>
        <name>ATP</name>
        <dbReference type="ChEBI" id="CHEBI:30616"/>
        <note>ligand shared between two neighboring subunits</note>
    </ligand>
</feature>
<feature type="binding site" evidence="1">
    <location>
        <position position="251"/>
    </location>
    <ligand>
        <name>ATP</name>
        <dbReference type="ChEBI" id="CHEBI:30616"/>
        <note>ligand shared between two neighboring subunits</note>
    </ligand>
</feature>
<feature type="binding site" evidence="1">
    <location>
        <position position="251"/>
    </location>
    <ligand>
        <name>L-methionine</name>
        <dbReference type="ChEBI" id="CHEBI:57844"/>
        <note>ligand shared between two neighboring subunits</note>
    </ligand>
</feature>
<feature type="binding site" description="in other chain" evidence="1">
    <location>
        <begin position="257"/>
        <end position="258"/>
    </location>
    <ligand>
        <name>ATP</name>
        <dbReference type="ChEBI" id="CHEBI:30616"/>
        <note>ligand shared between two neighboring subunits</note>
    </ligand>
</feature>
<feature type="binding site" evidence="1">
    <location>
        <position position="274"/>
    </location>
    <ligand>
        <name>ATP</name>
        <dbReference type="ChEBI" id="CHEBI:30616"/>
        <note>ligand shared between two neighboring subunits</note>
    </ligand>
</feature>
<feature type="binding site" evidence="1">
    <location>
        <position position="278"/>
    </location>
    <ligand>
        <name>ATP</name>
        <dbReference type="ChEBI" id="CHEBI:30616"/>
        <note>ligand shared between two neighboring subunits</note>
    </ligand>
</feature>
<feature type="binding site" description="in other chain" evidence="1">
    <location>
        <position position="282"/>
    </location>
    <ligand>
        <name>L-methionine</name>
        <dbReference type="ChEBI" id="CHEBI:57844"/>
        <note>ligand shared between two neighboring subunits</note>
    </ligand>
</feature>
<accession>Q2IZR2</accession>
<proteinExistence type="inferred from homology"/>
<organism>
    <name type="scientific">Rhodopseudomonas palustris (strain HaA2)</name>
    <dbReference type="NCBI Taxonomy" id="316058"/>
    <lineage>
        <taxon>Bacteria</taxon>
        <taxon>Pseudomonadati</taxon>
        <taxon>Pseudomonadota</taxon>
        <taxon>Alphaproteobacteria</taxon>
        <taxon>Hyphomicrobiales</taxon>
        <taxon>Nitrobacteraceae</taxon>
        <taxon>Rhodopseudomonas</taxon>
    </lineage>
</organism>
<protein>
    <recommendedName>
        <fullName evidence="1">S-adenosylmethionine synthase</fullName>
        <shortName evidence="1">AdoMet synthase</shortName>
        <ecNumber evidence="1">2.5.1.6</ecNumber>
    </recommendedName>
    <alternativeName>
        <fullName evidence="1">MAT</fullName>
    </alternativeName>
    <alternativeName>
        <fullName evidence="1">Methionine adenosyltransferase</fullName>
    </alternativeName>
</protein>